<reference key="1">
    <citation type="submission" date="2007-12" db="EMBL/GenBank/DDBJ databases">
        <title>Brucella suis ATCC 23445 whole genome shotgun sequencing project.</title>
        <authorList>
            <person name="Setubal J.C."/>
            <person name="Bowns C."/>
            <person name="Boyle S."/>
            <person name="Crasta O.R."/>
            <person name="Czar M.J."/>
            <person name="Dharmanolla C."/>
            <person name="Gillespie J.J."/>
            <person name="Kenyon R.W."/>
            <person name="Lu J."/>
            <person name="Mane S."/>
            <person name="Mohapatra S."/>
            <person name="Nagrani S."/>
            <person name="Purkayastha A."/>
            <person name="Rajasimha H.K."/>
            <person name="Shallom J.M."/>
            <person name="Shallom S."/>
            <person name="Shukla M."/>
            <person name="Snyder E.E."/>
            <person name="Sobral B.W."/>
            <person name="Wattam A.R."/>
            <person name="Will R."/>
            <person name="Williams K."/>
            <person name="Yoo H."/>
            <person name="Bruce D."/>
            <person name="Detter C."/>
            <person name="Munk C."/>
            <person name="Brettin T.S."/>
        </authorList>
    </citation>
    <scope>NUCLEOTIDE SEQUENCE [LARGE SCALE GENOMIC DNA]</scope>
    <source>
        <strain>ATCC 23445 / NCTC 10510</strain>
    </source>
</reference>
<organism>
    <name type="scientific">Brucella suis (strain ATCC 23445 / NCTC 10510)</name>
    <dbReference type="NCBI Taxonomy" id="470137"/>
    <lineage>
        <taxon>Bacteria</taxon>
        <taxon>Pseudomonadati</taxon>
        <taxon>Pseudomonadota</taxon>
        <taxon>Alphaproteobacteria</taxon>
        <taxon>Hyphomicrobiales</taxon>
        <taxon>Brucellaceae</taxon>
        <taxon>Brucella/Ochrobactrum group</taxon>
        <taxon>Brucella</taxon>
    </lineage>
</organism>
<accession>B0CK08</accession>
<name>RIMP_BRUSI</name>
<keyword id="KW-0963">Cytoplasm</keyword>
<keyword id="KW-0690">Ribosome biogenesis</keyword>
<gene>
    <name evidence="1" type="primary">rimP</name>
    <name type="ordered locus">BSUIS_A1999</name>
</gene>
<comment type="function">
    <text evidence="1">Required for maturation of 30S ribosomal subunits.</text>
</comment>
<comment type="subcellular location">
    <subcellularLocation>
        <location evidence="1">Cytoplasm</location>
    </subcellularLocation>
</comment>
<comment type="similarity">
    <text evidence="1">Belongs to the RimP family.</text>
</comment>
<protein>
    <recommendedName>
        <fullName evidence="1">Ribosome maturation factor RimP</fullName>
    </recommendedName>
</protein>
<proteinExistence type="inferred from homology"/>
<evidence type="ECO:0000255" key="1">
    <source>
        <dbReference type="HAMAP-Rule" id="MF_01077"/>
    </source>
</evidence>
<evidence type="ECO:0000256" key="2">
    <source>
        <dbReference type="SAM" id="MobiDB-lite"/>
    </source>
</evidence>
<sequence>MTEQVQANETETPVAVADERIIRETGIDAKVAGIVEPVINTLGFRLVRVRLSGLNGQTLQIMAERPDGTMTVDDCELVSRTVAPVLDVEDPISGKYHLEISSPGIDRPLVRKSDFSDWAGHIAKVETSIVHEGRKKFRGRIVVGEADSVTIESDQISYGNEPVVRIPFDLISDARLVLTDDLIRDALRKDKALREGRIPGDDLGAEPEDAASTETQEKK</sequence>
<dbReference type="EMBL" id="CP000911">
    <property type="protein sequence ID" value="ABY39009.1"/>
    <property type="molecule type" value="Genomic_DNA"/>
</dbReference>
<dbReference type="RefSeq" id="WP_002965224.1">
    <property type="nucleotide sequence ID" value="NC_010169.1"/>
</dbReference>
<dbReference type="SMR" id="B0CK08"/>
<dbReference type="GeneID" id="97534585"/>
<dbReference type="KEGG" id="bmt:BSUIS_A1999"/>
<dbReference type="HOGENOM" id="CLU_070525_0_1_5"/>
<dbReference type="Proteomes" id="UP000008545">
    <property type="component" value="Chromosome I"/>
</dbReference>
<dbReference type="GO" id="GO:0005829">
    <property type="term" value="C:cytosol"/>
    <property type="evidence" value="ECO:0007669"/>
    <property type="project" value="TreeGrafter"/>
</dbReference>
<dbReference type="GO" id="GO:0000028">
    <property type="term" value="P:ribosomal small subunit assembly"/>
    <property type="evidence" value="ECO:0007669"/>
    <property type="project" value="TreeGrafter"/>
</dbReference>
<dbReference type="GO" id="GO:0006412">
    <property type="term" value="P:translation"/>
    <property type="evidence" value="ECO:0007669"/>
    <property type="project" value="TreeGrafter"/>
</dbReference>
<dbReference type="CDD" id="cd01734">
    <property type="entry name" value="YlxS_C"/>
    <property type="match status" value="1"/>
</dbReference>
<dbReference type="Gene3D" id="3.30.300.70">
    <property type="entry name" value="RimP-like superfamily, N-terminal"/>
    <property type="match status" value="1"/>
</dbReference>
<dbReference type="HAMAP" id="MF_01077">
    <property type="entry name" value="RimP"/>
    <property type="match status" value="1"/>
</dbReference>
<dbReference type="InterPro" id="IPR003728">
    <property type="entry name" value="Ribosome_maturation_RimP"/>
</dbReference>
<dbReference type="InterPro" id="IPR028998">
    <property type="entry name" value="RimP_C"/>
</dbReference>
<dbReference type="InterPro" id="IPR036847">
    <property type="entry name" value="RimP_C_sf"/>
</dbReference>
<dbReference type="InterPro" id="IPR028989">
    <property type="entry name" value="RimP_N"/>
</dbReference>
<dbReference type="InterPro" id="IPR035956">
    <property type="entry name" value="RimP_N_sf"/>
</dbReference>
<dbReference type="NCBIfam" id="NF000932">
    <property type="entry name" value="PRK00092.2-5"/>
    <property type="match status" value="1"/>
</dbReference>
<dbReference type="PANTHER" id="PTHR33867">
    <property type="entry name" value="RIBOSOME MATURATION FACTOR RIMP"/>
    <property type="match status" value="1"/>
</dbReference>
<dbReference type="PANTHER" id="PTHR33867:SF1">
    <property type="entry name" value="RIBOSOME MATURATION FACTOR RIMP"/>
    <property type="match status" value="1"/>
</dbReference>
<dbReference type="Pfam" id="PF17384">
    <property type="entry name" value="DUF150_C"/>
    <property type="match status" value="1"/>
</dbReference>
<dbReference type="Pfam" id="PF02576">
    <property type="entry name" value="RimP_N"/>
    <property type="match status" value="1"/>
</dbReference>
<dbReference type="SUPFAM" id="SSF74942">
    <property type="entry name" value="YhbC-like, C-terminal domain"/>
    <property type="match status" value="1"/>
</dbReference>
<dbReference type="SUPFAM" id="SSF75420">
    <property type="entry name" value="YhbC-like, N-terminal domain"/>
    <property type="match status" value="1"/>
</dbReference>
<feature type="chain" id="PRO_1000084519" description="Ribosome maturation factor RimP">
    <location>
        <begin position="1"/>
        <end position="219"/>
    </location>
</feature>
<feature type="region of interest" description="Disordered" evidence="2">
    <location>
        <begin position="195"/>
        <end position="219"/>
    </location>
</feature>